<proteinExistence type="inferred from homology"/>
<evidence type="ECO:0000250" key="1"/>
<evidence type="ECO:0000250" key="2">
    <source>
        <dbReference type="UniProtKB" id="P52917"/>
    </source>
</evidence>
<evidence type="ECO:0000255" key="3"/>
<evidence type="ECO:0000256" key="4">
    <source>
        <dbReference type="SAM" id="MobiDB-lite"/>
    </source>
</evidence>
<evidence type="ECO:0000269" key="5">
    <source>
    </source>
</evidence>
<evidence type="ECO:0000305" key="6"/>
<comment type="function">
    <text evidence="2 5">Involved in the transport of biosynthetic membrane proteins from the prevacuolar/endosomal compartment to the vacuole. Involved in multivesicular body (MVB) protein sorting. Catalyzes the ATP-dependent dissociation of class E VPS proteins from endosomal membranes, such as the disassembly of the ESCRT-III complex (By similarity). Plays a role in regulating nuclear envelope (NE) morphology and nuclear integrity, particularly during spindle pole body (SPB) extrusion or insertion through the NE, and perhaps during karyokinesis (PubMed:28242692).</text>
</comment>
<comment type="catalytic activity">
    <reaction>
        <text>ATP + H2O = ADP + phosphate + H(+)</text>
        <dbReference type="Rhea" id="RHEA:13065"/>
        <dbReference type="ChEBI" id="CHEBI:15377"/>
        <dbReference type="ChEBI" id="CHEBI:15378"/>
        <dbReference type="ChEBI" id="CHEBI:30616"/>
        <dbReference type="ChEBI" id="CHEBI:43474"/>
        <dbReference type="ChEBI" id="CHEBI:456216"/>
        <dbReference type="EC" id="3.6.4.6"/>
    </reaction>
</comment>
<comment type="subcellular location">
    <subcellularLocation>
        <location evidence="1">Endosome membrane</location>
        <topology evidence="1">Peripheral membrane protein</topology>
    </subcellularLocation>
</comment>
<comment type="disruption phenotype">
    <text evidence="5">Slow growth rates of spores and severe nuclear envelope (NE) morphology defects (PubMed:28242692). Asymmetric and even failed karyokinesis (PubMed:28242692). Overgrowth of nuclear membranes, so-called karmellae, in cells with daughter spindle pole bodies (SPBs) that often fail to separate normally or display extensive delays in separation (PubMed:28242692). Large fenestrations through both the inner and outer nuclear membranes and abnormal nuclear integrity, i.e. leaking nuclei (PubMed:28242692). Extensive whorls of disorganized tubulo-vesicular membranes that are topologically continuous with the adjacent karmellae (PubMed:28242692). Decreased number of nuclear pore complexes (NPCs) (PubMed:28242692). Simultaneous knockout of cmp7 or lem2 suppresses the slow growth rates of spores and severe nuclear envelope (NE) morphology defects (PubMed:28242692).</text>
</comment>
<comment type="similarity">
    <text evidence="6">Belongs to the AAA ATPase family.</text>
</comment>
<keyword id="KW-0067">ATP-binding</keyword>
<keyword id="KW-0967">Endosome</keyword>
<keyword id="KW-0378">Hydrolase</keyword>
<keyword id="KW-0472">Membrane</keyword>
<keyword id="KW-0547">Nucleotide-binding</keyword>
<keyword id="KW-0653">Protein transport</keyword>
<keyword id="KW-1185">Reference proteome</keyword>
<keyword id="KW-0813">Transport</keyword>
<sequence length="432" mass="48402">MSNPDCLSKAISLVKTAIDNDNAEQYPDAYKYYQSALDYFMMALKYEKNEKSKEIIRSKVIEYLDRAEKLKVYLQEKNNQISSKSRVSNGNVEGSNSPTANEALDSDAKKLRSALTSAILVEKPNVRWDDIAGLENAKEALKETVLLPIKLPQLFSHGRKPWSGILLYGPPGTGKSYLAKAVATEAGSTFFSISSSDLVSKWMGESERLVRQLFEMAREQKPSIIFIDEIDSLCGSRSEGESESSRRIKTEFLVQMNGVGKDESGVLVLGATNIPWTLDSAIRRRFEKRIYIPLPNAHARARMFELNVGKIPSELTSQDFKELAKMTDGYSGSDISIVVRDAIMEPVRRIHTATHFKEVYDNKSNRTLVTPCSPGDPDAFESSWLEVNPEDIMEPKLTVRDFYSAVRKVKPTLNAGDIEKHTQFTKDFGAEG</sequence>
<dbReference type="EC" id="3.6.4.6"/>
<dbReference type="EMBL" id="L33456">
    <property type="protein sequence ID" value="AAA35347.1"/>
    <property type="molecule type" value="Genomic_DNA"/>
</dbReference>
<dbReference type="EMBL" id="CU329670">
    <property type="protein sequence ID" value="CAA91171.1"/>
    <property type="molecule type" value="Genomic_DNA"/>
</dbReference>
<dbReference type="PIR" id="T38572">
    <property type="entry name" value="S62461"/>
</dbReference>
<dbReference type="RefSeq" id="NP_593086.1">
    <property type="nucleotide sequence ID" value="NM_001018484.2"/>
</dbReference>
<dbReference type="SMR" id="Q09803"/>
<dbReference type="BioGRID" id="278533">
    <property type="interactions" value="7"/>
</dbReference>
<dbReference type="FunCoup" id="Q09803">
    <property type="interactions" value="592"/>
</dbReference>
<dbReference type="STRING" id="284812.Q09803"/>
<dbReference type="iPTMnet" id="Q09803"/>
<dbReference type="SwissPalm" id="Q09803"/>
<dbReference type="PaxDb" id="4896-SPAC2G11.06.1"/>
<dbReference type="EnsemblFungi" id="SPAC2G11.06.1">
    <property type="protein sequence ID" value="SPAC2G11.06.1:pep"/>
    <property type="gene ID" value="SPAC2G11.06"/>
</dbReference>
<dbReference type="GeneID" id="2542054"/>
<dbReference type="KEGG" id="spo:2542054"/>
<dbReference type="PomBase" id="SPAC2G11.06">
    <property type="gene designation" value="vps4"/>
</dbReference>
<dbReference type="VEuPathDB" id="FungiDB:SPAC2G11.06"/>
<dbReference type="eggNOG" id="KOG0739">
    <property type="taxonomic scope" value="Eukaryota"/>
</dbReference>
<dbReference type="HOGENOM" id="CLU_000688_21_2_1"/>
<dbReference type="InParanoid" id="Q09803"/>
<dbReference type="OMA" id="IEWTNEF"/>
<dbReference type="PhylomeDB" id="Q09803"/>
<dbReference type="Reactome" id="R-SPO-917729">
    <property type="pathway name" value="Endosomal Sorting Complex Required For Transport (ESCRT)"/>
</dbReference>
<dbReference type="Reactome" id="R-SPO-9668328">
    <property type="pathway name" value="Sealing of the nuclear envelope (NE) by ESCRT-III"/>
</dbReference>
<dbReference type="PRO" id="PR:Q09803"/>
<dbReference type="Proteomes" id="UP000002485">
    <property type="component" value="Chromosome I"/>
</dbReference>
<dbReference type="GO" id="GO:0005737">
    <property type="term" value="C:cytoplasm"/>
    <property type="evidence" value="ECO:0007005"/>
    <property type="project" value="PomBase"/>
</dbReference>
<dbReference type="GO" id="GO:0005829">
    <property type="term" value="C:cytosol"/>
    <property type="evidence" value="ECO:0007005"/>
    <property type="project" value="PomBase"/>
</dbReference>
<dbReference type="GO" id="GO:0010008">
    <property type="term" value="C:endosome membrane"/>
    <property type="evidence" value="ECO:0007669"/>
    <property type="project" value="UniProtKB-SubCell"/>
</dbReference>
<dbReference type="GO" id="GO:0005634">
    <property type="term" value="C:nucleus"/>
    <property type="evidence" value="ECO:0007005"/>
    <property type="project" value="PomBase"/>
</dbReference>
<dbReference type="GO" id="GO:0005524">
    <property type="term" value="F:ATP binding"/>
    <property type="evidence" value="ECO:0000255"/>
    <property type="project" value="PomBase"/>
</dbReference>
<dbReference type="GO" id="GO:0016887">
    <property type="term" value="F:ATP hydrolysis activity"/>
    <property type="evidence" value="ECO:0000318"/>
    <property type="project" value="GO_Central"/>
</dbReference>
<dbReference type="GO" id="GO:0016197">
    <property type="term" value="P:endosomal transport"/>
    <property type="evidence" value="ECO:0000318"/>
    <property type="project" value="GO_Central"/>
</dbReference>
<dbReference type="GO" id="GO:0045324">
    <property type="term" value="P:late endosome to vacuole transport"/>
    <property type="evidence" value="ECO:0000315"/>
    <property type="project" value="PomBase"/>
</dbReference>
<dbReference type="GO" id="GO:0007084">
    <property type="term" value="P:mitotic nuclear membrane reassembly"/>
    <property type="evidence" value="ECO:0000315"/>
    <property type="project" value="PomBase"/>
</dbReference>
<dbReference type="GO" id="GO:0043328">
    <property type="term" value="P:protein transport to vacuole involved in ubiquitin-dependent protein catabolic process via the multivesicular body sorting pathway"/>
    <property type="evidence" value="ECO:0000315"/>
    <property type="project" value="PomBase"/>
</dbReference>
<dbReference type="GO" id="GO:0007033">
    <property type="term" value="P:vacuole organization"/>
    <property type="evidence" value="ECO:0000318"/>
    <property type="project" value="GO_Central"/>
</dbReference>
<dbReference type="CDD" id="cd02678">
    <property type="entry name" value="MIT_VPS4"/>
    <property type="match status" value="1"/>
</dbReference>
<dbReference type="FunFam" id="1.20.58.80:FF:000004">
    <property type="entry name" value="Vacuolar protein sorting-associated protein 4"/>
    <property type="match status" value="1"/>
</dbReference>
<dbReference type="FunFam" id="3.40.50.300:FF:000043">
    <property type="entry name" value="Vacuolar protein sorting-associated protein 4"/>
    <property type="match status" value="1"/>
</dbReference>
<dbReference type="FunFam" id="1.10.8.60:FF:000015">
    <property type="entry name" value="vacuolar protein sorting-associated protein 4A"/>
    <property type="match status" value="1"/>
</dbReference>
<dbReference type="Gene3D" id="1.10.8.60">
    <property type="match status" value="1"/>
</dbReference>
<dbReference type="Gene3D" id="3.40.50.300">
    <property type="entry name" value="P-loop containing nucleotide triphosphate hydrolases"/>
    <property type="match status" value="1"/>
</dbReference>
<dbReference type="Gene3D" id="1.20.58.80">
    <property type="entry name" value="Phosphotransferase system, lactose/cellobiose-type IIA subunit"/>
    <property type="match status" value="1"/>
</dbReference>
<dbReference type="InterPro" id="IPR003593">
    <property type="entry name" value="AAA+_ATPase"/>
</dbReference>
<dbReference type="InterPro" id="IPR041569">
    <property type="entry name" value="AAA_lid_3"/>
</dbReference>
<dbReference type="InterPro" id="IPR003959">
    <property type="entry name" value="ATPase_AAA_core"/>
</dbReference>
<dbReference type="InterPro" id="IPR003960">
    <property type="entry name" value="ATPase_AAA_CS"/>
</dbReference>
<dbReference type="InterPro" id="IPR007330">
    <property type="entry name" value="MIT_dom"/>
</dbReference>
<dbReference type="InterPro" id="IPR036181">
    <property type="entry name" value="MIT_dom_sf"/>
</dbReference>
<dbReference type="InterPro" id="IPR050304">
    <property type="entry name" value="MT-severing_AAA_ATPase"/>
</dbReference>
<dbReference type="InterPro" id="IPR027417">
    <property type="entry name" value="P-loop_NTPase"/>
</dbReference>
<dbReference type="InterPro" id="IPR015415">
    <property type="entry name" value="Spast_Vps4_C"/>
</dbReference>
<dbReference type="InterPro" id="IPR045253">
    <property type="entry name" value="VPS4_MIT"/>
</dbReference>
<dbReference type="PANTHER" id="PTHR23074">
    <property type="entry name" value="AAA DOMAIN-CONTAINING"/>
    <property type="match status" value="1"/>
</dbReference>
<dbReference type="PANTHER" id="PTHR23074:SF83">
    <property type="entry name" value="VACUOLAR PROTEIN SORTING-ASSOCIATED PROTEIN 4A"/>
    <property type="match status" value="1"/>
</dbReference>
<dbReference type="Pfam" id="PF00004">
    <property type="entry name" value="AAA"/>
    <property type="match status" value="1"/>
</dbReference>
<dbReference type="Pfam" id="PF17862">
    <property type="entry name" value="AAA_lid_3"/>
    <property type="match status" value="1"/>
</dbReference>
<dbReference type="Pfam" id="PF04212">
    <property type="entry name" value="MIT"/>
    <property type="match status" value="1"/>
</dbReference>
<dbReference type="Pfam" id="PF09336">
    <property type="entry name" value="Vps4_C"/>
    <property type="match status" value="1"/>
</dbReference>
<dbReference type="SMART" id="SM00382">
    <property type="entry name" value="AAA"/>
    <property type="match status" value="1"/>
</dbReference>
<dbReference type="SMART" id="SM00745">
    <property type="entry name" value="MIT"/>
    <property type="match status" value="1"/>
</dbReference>
<dbReference type="SUPFAM" id="SSF116846">
    <property type="entry name" value="MIT domain"/>
    <property type="match status" value="1"/>
</dbReference>
<dbReference type="SUPFAM" id="SSF52540">
    <property type="entry name" value="P-loop containing nucleoside triphosphate hydrolases"/>
    <property type="match status" value="1"/>
</dbReference>
<dbReference type="PROSITE" id="PS00674">
    <property type="entry name" value="AAA"/>
    <property type="match status" value="1"/>
</dbReference>
<organism>
    <name type="scientific">Schizosaccharomyces pombe (strain 972 / ATCC 24843)</name>
    <name type="common">Fission yeast</name>
    <dbReference type="NCBI Taxonomy" id="284812"/>
    <lineage>
        <taxon>Eukaryota</taxon>
        <taxon>Fungi</taxon>
        <taxon>Dikarya</taxon>
        <taxon>Ascomycota</taxon>
        <taxon>Taphrinomycotina</taxon>
        <taxon>Schizosaccharomycetes</taxon>
        <taxon>Schizosaccharomycetales</taxon>
        <taxon>Schizosaccharomycetaceae</taxon>
        <taxon>Schizosaccharomyces</taxon>
    </lineage>
</organism>
<feature type="chain" id="PRO_0000084769" description="Suppressor protein of bem1/bed5 double mutants">
    <location>
        <begin position="1"/>
        <end position="432"/>
    </location>
</feature>
<feature type="domain" description="MIT">
    <location>
        <begin position="3"/>
        <end position="80"/>
    </location>
</feature>
<feature type="region of interest" description="Disordered" evidence="4">
    <location>
        <begin position="83"/>
        <end position="103"/>
    </location>
</feature>
<feature type="compositionally biased region" description="Polar residues" evidence="4">
    <location>
        <begin position="83"/>
        <end position="100"/>
    </location>
</feature>
<feature type="binding site" evidence="3">
    <location>
        <begin position="169"/>
        <end position="176"/>
    </location>
    <ligand>
        <name>ATP</name>
        <dbReference type="ChEBI" id="CHEBI:30616"/>
    </ligand>
</feature>
<protein>
    <recommendedName>
        <fullName>Suppressor protein of bem1/bed5 double mutants</fullName>
        <ecNumber>3.6.4.6</ecNumber>
    </recommendedName>
</protein>
<name>VPS4_SCHPO</name>
<accession>Q09803</accession>
<gene>
    <name type="primary">vps4</name>
    <name type="ORF">SPAC2G11.06</name>
</gene>
<reference key="1">
    <citation type="submission" date="1995-06" db="EMBL/GenBank/DDBJ databases">
        <authorList>
            <person name="Valencik M.L."/>
            <person name="Pringle J.R."/>
        </authorList>
    </citation>
    <scope>NUCLEOTIDE SEQUENCE [GENOMIC DNA]</scope>
</reference>
<reference key="2">
    <citation type="journal article" date="2002" name="Nature">
        <title>The genome sequence of Schizosaccharomyces pombe.</title>
        <authorList>
            <person name="Wood V."/>
            <person name="Gwilliam R."/>
            <person name="Rajandream M.A."/>
            <person name="Lyne M.H."/>
            <person name="Lyne R."/>
            <person name="Stewart A."/>
            <person name="Sgouros J.G."/>
            <person name="Peat N."/>
            <person name="Hayles J."/>
            <person name="Baker S.G."/>
            <person name="Basham D."/>
            <person name="Bowman S."/>
            <person name="Brooks K."/>
            <person name="Brown D."/>
            <person name="Brown S."/>
            <person name="Chillingworth T."/>
            <person name="Churcher C.M."/>
            <person name="Collins M."/>
            <person name="Connor R."/>
            <person name="Cronin A."/>
            <person name="Davis P."/>
            <person name="Feltwell T."/>
            <person name="Fraser A."/>
            <person name="Gentles S."/>
            <person name="Goble A."/>
            <person name="Hamlin N."/>
            <person name="Harris D.E."/>
            <person name="Hidalgo J."/>
            <person name="Hodgson G."/>
            <person name="Holroyd S."/>
            <person name="Hornsby T."/>
            <person name="Howarth S."/>
            <person name="Huckle E.J."/>
            <person name="Hunt S."/>
            <person name="Jagels K."/>
            <person name="James K.D."/>
            <person name="Jones L."/>
            <person name="Jones M."/>
            <person name="Leather S."/>
            <person name="McDonald S."/>
            <person name="McLean J."/>
            <person name="Mooney P."/>
            <person name="Moule S."/>
            <person name="Mungall K.L."/>
            <person name="Murphy L.D."/>
            <person name="Niblett D."/>
            <person name="Odell C."/>
            <person name="Oliver K."/>
            <person name="O'Neil S."/>
            <person name="Pearson D."/>
            <person name="Quail M.A."/>
            <person name="Rabbinowitsch E."/>
            <person name="Rutherford K.M."/>
            <person name="Rutter S."/>
            <person name="Saunders D."/>
            <person name="Seeger K."/>
            <person name="Sharp S."/>
            <person name="Skelton J."/>
            <person name="Simmonds M.N."/>
            <person name="Squares R."/>
            <person name="Squares S."/>
            <person name="Stevens K."/>
            <person name="Taylor K."/>
            <person name="Taylor R.G."/>
            <person name="Tivey A."/>
            <person name="Walsh S.V."/>
            <person name="Warren T."/>
            <person name="Whitehead S."/>
            <person name="Woodward J.R."/>
            <person name="Volckaert G."/>
            <person name="Aert R."/>
            <person name="Robben J."/>
            <person name="Grymonprez B."/>
            <person name="Weltjens I."/>
            <person name="Vanstreels E."/>
            <person name="Rieger M."/>
            <person name="Schaefer M."/>
            <person name="Mueller-Auer S."/>
            <person name="Gabel C."/>
            <person name="Fuchs M."/>
            <person name="Duesterhoeft A."/>
            <person name="Fritzc C."/>
            <person name="Holzer E."/>
            <person name="Moestl D."/>
            <person name="Hilbert H."/>
            <person name="Borzym K."/>
            <person name="Langer I."/>
            <person name="Beck A."/>
            <person name="Lehrach H."/>
            <person name="Reinhardt R."/>
            <person name="Pohl T.M."/>
            <person name="Eger P."/>
            <person name="Zimmermann W."/>
            <person name="Wedler H."/>
            <person name="Wambutt R."/>
            <person name="Purnelle B."/>
            <person name="Goffeau A."/>
            <person name="Cadieu E."/>
            <person name="Dreano S."/>
            <person name="Gloux S."/>
            <person name="Lelaure V."/>
            <person name="Mottier S."/>
            <person name="Galibert F."/>
            <person name="Aves S.J."/>
            <person name="Xiang Z."/>
            <person name="Hunt C."/>
            <person name="Moore K."/>
            <person name="Hurst S.M."/>
            <person name="Lucas M."/>
            <person name="Rochet M."/>
            <person name="Gaillardin C."/>
            <person name="Tallada V.A."/>
            <person name="Garzon A."/>
            <person name="Thode G."/>
            <person name="Daga R.R."/>
            <person name="Cruzado L."/>
            <person name="Jimenez J."/>
            <person name="Sanchez M."/>
            <person name="del Rey F."/>
            <person name="Benito J."/>
            <person name="Dominguez A."/>
            <person name="Revuelta J.L."/>
            <person name="Moreno S."/>
            <person name="Armstrong J."/>
            <person name="Forsburg S.L."/>
            <person name="Cerutti L."/>
            <person name="Lowe T."/>
            <person name="McCombie W.R."/>
            <person name="Paulsen I."/>
            <person name="Potashkin J."/>
            <person name="Shpakovski G.V."/>
            <person name="Ussery D."/>
            <person name="Barrell B.G."/>
            <person name="Nurse P."/>
        </authorList>
    </citation>
    <scope>NUCLEOTIDE SEQUENCE [LARGE SCALE GENOMIC DNA]</scope>
    <source>
        <strain>972 / ATCC 24843</strain>
    </source>
</reference>
<reference key="3">
    <citation type="journal article" date="2017" name="Proc. Natl. Acad. Sci. U.S.A.">
        <title>LEM2 recruits CHMP7 for ESCRT-mediated nuclear envelope closure in fission yeast and human cells.</title>
        <authorList>
            <person name="Gu M."/>
            <person name="LaJoie D."/>
            <person name="Chen O.S."/>
            <person name="von Appen A."/>
            <person name="Ladinsky M.S."/>
            <person name="Redd M.J."/>
            <person name="Nikolova L."/>
            <person name="Bjorkman P.J."/>
            <person name="Sundquist W.I."/>
            <person name="Ullman K.S."/>
            <person name="Frost A."/>
        </authorList>
    </citation>
    <scope>FUNCTION</scope>
    <scope>DISRUPTION PHENOTYPE</scope>
</reference>